<accession>P59816</accession>
<accession>A0A1R3XZ01</accession>
<accession>X2BHS4</accession>
<feature type="chain" id="PRO_0000188716" description="1,4-alpha-glucan branching enzyme GlgB">
    <location>
        <begin position="1"/>
        <end position="731"/>
    </location>
</feature>
<feature type="active site" description="Nucleophile" evidence="1">
    <location>
        <position position="411"/>
    </location>
</feature>
<feature type="active site" description="Proton donor" evidence="1">
    <location>
        <position position="464"/>
    </location>
</feature>
<sequence length="731" mass="81671">MSRSEKLTGEHLAPEPAEMARLVAGTHHNPHGILGAHEYGDHTVIRAFRPHAVEVVALVGKDRFSLQHLDSGLFAVALPFVDLIDYRLQVTYEGCEPHTVADAYRFLPTLGEVDLHLFAEGRHERLWEVLGAHPRSFTTADGVVSGVSFAVWAPNAKGVSLIGEFNGWNGHEAPMRVLGPSGVWELFWPDFPCDGLYKFRVHGADGVVTDRADPFAFGTEVPPQTASRVTSSDYTWGDDDWMAGRALRNPVNEAMSTYEVHLGSWRPGLSYRQLARELTDYIVDQGFTHVELLPVAEHPFAGSWGYQVTSYYAPTSRFGTPDDFRALVDALHQAGIGVIVDWVPAHFPKDAWALGRFDGTPLYEHSDPKRGEQLDWGTYVFDFGRPEVRNFLVANALYWLQEFHIDGLRVDAVASMLYLDYSRPEGGWTPNVHGGRENLEAVQFLQEMNATAHKVAPGIVTIAEESTSWPGVTRPTNIGGLGFSMKWNMGWMHDTLDYVSRDPVYRSYHHHEMTFSMLYAFSENYVLPLSHDEVVHGKGTLWGRMPGNNHVKAAGLRSLLAYQWAHPGKQLLFMGQEFGQRAEWSEQRGLDWFQLDENGFSNGIQRLVRDINDIYRCHPALWSLDTTPEGYSWIDANDSANNVLSFMRYGSDGSVLACVFNFAGAEHRDYRLGLPRAGRWREVLNTDATIYHGSGIGNLGGVDATDDPWHGRPASAVLVLPPTSALWLTPA</sequence>
<keyword id="KW-0119">Carbohydrate metabolism</keyword>
<keyword id="KW-0320">Glycogen biosynthesis</keyword>
<keyword id="KW-0321">Glycogen metabolism</keyword>
<keyword id="KW-0328">Glycosyltransferase</keyword>
<keyword id="KW-1185">Reference proteome</keyword>
<keyword id="KW-0808">Transferase</keyword>
<proteinExistence type="inferred from homology"/>
<reference key="1">
    <citation type="journal article" date="2003" name="Proc. Natl. Acad. Sci. U.S.A.">
        <title>The complete genome sequence of Mycobacterium bovis.</title>
        <authorList>
            <person name="Garnier T."/>
            <person name="Eiglmeier K."/>
            <person name="Camus J.-C."/>
            <person name="Medina N."/>
            <person name="Mansoor H."/>
            <person name="Pryor M."/>
            <person name="Duthoy S."/>
            <person name="Grondin S."/>
            <person name="Lacroix C."/>
            <person name="Monsempe C."/>
            <person name="Simon S."/>
            <person name="Harris B."/>
            <person name="Atkin R."/>
            <person name="Doggett J."/>
            <person name="Mayes R."/>
            <person name="Keating L."/>
            <person name="Wheeler P.R."/>
            <person name="Parkhill J."/>
            <person name="Barrell B.G."/>
            <person name="Cole S.T."/>
            <person name="Gordon S.V."/>
            <person name="Hewinson R.G."/>
        </authorList>
    </citation>
    <scope>NUCLEOTIDE SEQUENCE [LARGE SCALE GENOMIC DNA]</scope>
    <source>
        <strain>ATCC BAA-935 / AF2122/97</strain>
    </source>
</reference>
<reference key="2">
    <citation type="journal article" date="2017" name="Genome Announc.">
        <title>Updated reference genome sequence and annotation of Mycobacterium bovis AF2122/97.</title>
        <authorList>
            <person name="Malone K.M."/>
            <person name="Farrell D."/>
            <person name="Stuber T.P."/>
            <person name="Schubert O.T."/>
            <person name="Aebersold R."/>
            <person name="Robbe-Austerman S."/>
            <person name="Gordon S.V."/>
        </authorList>
    </citation>
    <scope>NUCLEOTIDE SEQUENCE [LARGE SCALE GENOMIC DNA]</scope>
    <scope>GENOME REANNOTATION</scope>
    <source>
        <strain>ATCC BAA-935 / AF2122/97</strain>
    </source>
</reference>
<comment type="function">
    <text evidence="1">Catalyzes the formation of the alpha-1,6-glucosidic linkages in glycogen by scission of a 1,4-alpha-linked oligosaccharide from growing alpha-1,4-glucan chains and the subsequent attachment of the oligosaccharide to the alpha-1,6 position.</text>
</comment>
<comment type="catalytic activity">
    <reaction evidence="1">
        <text>Transfers a segment of a (1-&gt;4)-alpha-D-glucan chain to a primary hydroxy group in a similar glucan chain.</text>
        <dbReference type="EC" id="2.4.1.18"/>
    </reaction>
</comment>
<comment type="pathway">
    <text evidence="1">Glycan biosynthesis; glycogen biosynthesis.</text>
</comment>
<comment type="subunit">
    <text evidence="1">Monomer.</text>
</comment>
<comment type="similarity">
    <text evidence="1">Belongs to the glycosyl hydrolase 13 family. GlgB subfamily.</text>
</comment>
<protein>
    <recommendedName>
        <fullName evidence="1">1,4-alpha-glucan branching enzyme GlgB</fullName>
        <ecNumber evidence="1">2.4.1.18</ecNumber>
    </recommendedName>
    <alternativeName>
        <fullName evidence="1">1,4-alpha-D-glucan:1,4-alpha-D-glucan 6-glucosyl-transferase</fullName>
    </alternativeName>
    <alternativeName>
        <fullName evidence="1">Alpha-(1-&gt;4)-glucan branching enzyme</fullName>
    </alternativeName>
    <alternativeName>
        <fullName evidence="1">Glycogen branching enzyme</fullName>
        <shortName evidence="1">BE</shortName>
    </alternativeName>
</protein>
<organism>
    <name type="scientific">Mycobacterium bovis (strain ATCC BAA-935 / AF2122/97)</name>
    <dbReference type="NCBI Taxonomy" id="233413"/>
    <lineage>
        <taxon>Bacteria</taxon>
        <taxon>Bacillati</taxon>
        <taxon>Actinomycetota</taxon>
        <taxon>Actinomycetes</taxon>
        <taxon>Mycobacteriales</taxon>
        <taxon>Mycobacteriaceae</taxon>
        <taxon>Mycobacterium</taxon>
        <taxon>Mycobacterium tuberculosis complex</taxon>
    </lineage>
</organism>
<gene>
    <name evidence="1" type="primary">glgB</name>
    <name type="ordered locus">BQ2027_MB1361C</name>
</gene>
<dbReference type="EC" id="2.4.1.18" evidence="1"/>
<dbReference type="EMBL" id="LT708304">
    <property type="protein sequence ID" value="SIT99964.1"/>
    <property type="molecule type" value="Genomic_DNA"/>
</dbReference>
<dbReference type="RefSeq" id="NP_855015.1">
    <property type="nucleotide sequence ID" value="NC_002945.3"/>
</dbReference>
<dbReference type="RefSeq" id="WP_003406892.1">
    <property type="nucleotide sequence ID" value="NC_002945.4"/>
</dbReference>
<dbReference type="SMR" id="P59816"/>
<dbReference type="KEGG" id="mbo:BQ2027_MB1361C"/>
<dbReference type="PATRIC" id="fig|233413.5.peg.1493"/>
<dbReference type="UniPathway" id="UPA00164"/>
<dbReference type="Proteomes" id="UP000001419">
    <property type="component" value="Chromosome"/>
</dbReference>
<dbReference type="GO" id="GO:0005829">
    <property type="term" value="C:cytosol"/>
    <property type="evidence" value="ECO:0007669"/>
    <property type="project" value="TreeGrafter"/>
</dbReference>
<dbReference type="GO" id="GO:0003844">
    <property type="term" value="F:1,4-alpha-glucan branching enzyme activity"/>
    <property type="evidence" value="ECO:0007669"/>
    <property type="project" value="UniProtKB-UniRule"/>
</dbReference>
<dbReference type="GO" id="GO:0043169">
    <property type="term" value="F:cation binding"/>
    <property type="evidence" value="ECO:0007669"/>
    <property type="project" value="InterPro"/>
</dbReference>
<dbReference type="GO" id="GO:0004553">
    <property type="term" value="F:hydrolase activity, hydrolyzing O-glycosyl compounds"/>
    <property type="evidence" value="ECO:0007669"/>
    <property type="project" value="InterPro"/>
</dbReference>
<dbReference type="GO" id="GO:0005978">
    <property type="term" value="P:glycogen biosynthetic process"/>
    <property type="evidence" value="ECO:0007669"/>
    <property type="project" value="UniProtKB-UniRule"/>
</dbReference>
<dbReference type="CDD" id="cd11322">
    <property type="entry name" value="AmyAc_Glg_BE"/>
    <property type="match status" value="1"/>
</dbReference>
<dbReference type="CDD" id="cd02855">
    <property type="entry name" value="E_set_GBE_prok_N"/>
    <property type="match status" value="1"/>
</dbReference>
<dbReference type="FunFam" id="2.60.40.10:FF:000169">
    <property type="entry name" value="1,4-alpha-glucan branching enzyme GlgB"/>
    <property type="match status" value="1"/>
</dbReference>
<dbReference type="FunFam" id="2.60.40.10:FF:002204">
    <property type="entry name" value="1,4-alpha-glucan branching enzyme GlgB"/>
    <property type="match status" value="1"/>
</dbReference>
<dbReference type="FunFam" id="2.60.40.1180:FF:000002">
    <property type="entry name" value="1,4-alpha-glucan branching enzyme GlgB"/>
    <property type="match status" value="1"/>
</dbReference>
<dbReference type="FunFam" id="3.20.20.80:FF:000003">
    <property type="entry name" value="1,4-alpha-glucan branching enzyme GlgB"/>
    <property type="match status" value="1"/>
</dbReference>
<dbReference type="Gene3D" id="3.20.20.80">
    <property type="entry name" value="Glycosidases"/>
    <property type="match status" value="1"/>
</dbReference>
<dbReference type="Gene3D" id="2.60.40.1180">
    <property type="entry name" value="Golgi alpha-mannosidase II"/>
    <property type="match status" value="1"/>
</dbReference>
<dbReference type="Gene3D" id="2.60.40.10">
    <property type="entry name" value="Immunoglobulins"/>
    <property type="match status" value="2"/>
</dbReference>
<dbReference type="HAMAP" id="MF_00685">
    <property type="entry name" value="GlgB"/>
    <property type="match status" value="1"/>
</dbReference>
<dbReference type="InterPro" id="IPR006048">
    <property type="entry name" value="A-amylase/branching_C"/>
</dbReference>
<dbReference type="InterPro" id="IPR037439">
    <property type="entry name" value="Branching_enzy"/>
</dbReference>
<dbReference type="InterPro" id="IPR006407">
    <property type="entry name" value="GlgB"/>
</dbReference>
<dbReference type="InterPro" id="IPR054169">
    <property type="entry name" value="GlgB_N"/>
</dbReference>
<dbReference type="InterPro" id="IPR044143">
    <property type="entry name" value="GlgB_N_E_set_prok"/>
</dbReference>
<dbReference type="InterPro" id="IPR006047">
    <property type="entry name" value="Glyco_hydro_13_cat_dom"/>
</dbReference>
<dbReference type="InterPro" id="IPR004193">
    <property type="entry name" value="Glyco_hydro_13_N"/>
</dbReference>
<dbReference type="InterPro" id="IPR013780">
    <property type="entry name" value="Glyco_hydro_b"/>
</dbReference>
<dbReference type="InterPro" id="IPR017853">
    <property type="entry name" value="Glycoside_hydrolase_SF"/>
</dbReference>
<dbReference type="InterPro" id="IPR013783">
    <property type="entry name" value="Ig-like_fold"/>
</dbReference>
<dbReference type="InterPro" id="IPR014756">
    <property type="entry name" value="Ig_E-set"/>
</dbReference>
<dbReference type="NCBIfam" id="TIGR01515">
    <property type="entry name" value="branching_enzym"/>
    <property type="match status" value="1"/>
</dbReference>
<dbReference type="NCBIfam" id="NF003811">
    <property type="entry name" value="PRK05402.1"/>
    <property type="match status" value="1"/>
</dbReference>
<dbReference type="NCBIfam" id="NF008967">
    <property type="entry name" value="PRK12313.1"/>
    <property type="match status" value="1"/>
</dbReference>
<dbReference type="PANTHER" id="PTHR43651">
    <property type="entry name" value="1,4-ALPHA-GLUCAN-BRANCHING ENZYME"/>
    <property type="match status" value="1"/>
</dbReference>
<dbReference type="PANTHER" id="PTHR43651:SF3">
    <property type="entry name" value="1,4-ALPHA-GLUCAN-BRANCHING ENZYME"/>
    <property type="match status" value="1"/>
</dbReference>
<dbReference type="Pfam" id="PF00128">
    <property type="entry name" value="Alpha-amylase"/>
    <property type="match status" value="2"/>
</dbReference>
<dbReference type="Pfam" id="PF02806">
    <property type="entry name" value="Alpha-amylase_C"/>
    <property type="match status" value="1"/>
</dbReference>
<dbReference type="Pfam" id="PF02922">
    <property type="entry name" value="CBM_48"/>
    <property type="match status" value="1"/>
</dbReference>
<dbReference type="Pfam" id="PF22019">
    <property type="entry name" value="GlgB_N"/>
    <property type="match status" value="1"/>
</dbReference>
<dbReference type="PIRSF" id="PIRSF000463">
    <property type="entry name" value="GlgB"/>
    <property type="match status" value="1"/>
</dbReference>
<dbReference type="SMART" id="SM00642">
    <property type="entry name" value="Aamy"/>
    <property type="match status" value="1"/>
</dbReference>
<dbReference type="SUPFAM" id="SSF51445">
    <property type="entry name" value="(Trans)glycosidases"/>
    <property type="match status" value="1"/>
</dbReference>
<dbReference type="SUPFAM" id="SSF81296">
    <property type="entry name" value="E set domains"/>
    <property type="match status" value="2"/>
</dbReference>
<dbReference type="SUPFAM" id="SSF51011">
    <property type="entry name" value="Glycosyl hydrolase domain"/>
    <property type="match status" value="1"/>
</dbReference>
<evidence type="ECO:0000255" key="1">
    <source>
        <dbReference type="HAMAP-Rule" id="MF_00685"/>
    </source>
</evidence>
<name>GLGB_MYCBO</name>